<organism>
    <name type="scientific">Klebsiella pneumoniae subsp. pneumoniae (strain ATCC 700721 / MGH 78578)</name>
    <dbReference type="NCBI Taxonomy" id="272620"/>
    <lineage>
        <taxon>Bacteria</taxon>
        <taxon>Pseudomonadati</taxon>
        <taxon>Pseudomonadota</taxon>
        <taxon>Gammaproteobacteria</taxon>
        <taxon>Enterobacterales</taxon>
        <taxon>Enterobacteriaceae</taxon>
        <taxon>Klebsiella/Raoultella group</taxon>
        <taxon>Klebsiella</taxon>
        <taxon>Klebsiella pneumoniae complex</taxon>
    </lineage>
</organism>
<comment type="function">
    <text evidence="1">Catalyzes the decarboxylation of oxaloacetate coupled to Na(+) translocation.</text>
</comment>
<comment type="catalytic activity">
    <reaction evidence="1">
        <text>oxaloacetate + 2 Na(+)(in) + H(+) = pyruvate + 2 Na(+)(out) + CO2</text>
        <dbReference type="Rhea" id="RHEA:57724"/>
        <dbReference type="ChEBI" id="CHEBI:15361"/>
        <dbReference type="ChEBI" id="CHEBI:15378"/>
        <dbReference type="ChEBI" id="CHEBI:16452"/>
        <dbReference type="ChEBI" id="CHEBI:16526"/>
        <dbReference type="ChEBI" id="CHEBI:29101"/>
        <dbReference type="EC" id="7.2.4.2"/>
    </reaction>
</comment>
<comment type="cofactor">
    <cofactor evidence="1">
        <name>Na(+)</name>
        <dbReference type="ChEBI" id="CHEBI:29101"/>
    </cofactor>
</comment>
<comment type="subunit">
    <text evidence="1">Heterotrimer of an alpha, a beta and a gamma subunit.</text>
</comment>
<comment type="subcellular location">
    <subcellularLocation>
        <location evidence="1">Cell membrane</location>
        <topology evidence="1">Single-pass membrane protein</topology>
    </subcellularLocation>
</comment>
<comment type="similarity">
    <text evidence="1">Belongs to the OadG family.</text>
</comment>
<proteinExistence type="inferred from homology"/>
<feature type="chain" id="PRO_1000049821" description="Probable oxaloacetate decarboxylase gamma chain">
    <location>
        <begin position="1"/>
        <end position="83"/>
    </location>
</feature>
<feature type="transmembrane region" description="Helical" evidence="1">
    <location>
        <begin position="13"/>
        <end position="33"/>
    </location>
</feature>
<sequence>MTDNAILLGEGFTLMFLGMGFVLVFLLLLIFAIRGMSLAVNRLFSEPPAAPKPAPAAVAPADDFARLKPAIVAAIHHHRRLHP</sequence>
<gene>
    <name evidence="1" type="primary">oadG</name>
    <name type="ordered locus">KPN78578_00310</name>
    <name type="ORF">KPN_00032</name>
</gene>
<keyword id="KW-1003">Cell membrane</keyword>
<keyword id="KW-0406">Ion transport</keyword>
<keyword id="KW-0472">Membrane</keyword>
<keyword id="KW-0915">Sodium</keyword>
<keyword id="KW-0739">Sodium transport</keyword>
<keyword id="KW-1278">Translocase</keyword>
<keyword id="KW-0812">Transmembrane</keyword>
<keyword id="KW-1133">Transmembrane helix</keyword>
<keyword id="KW-0813">Transport</keyword>
<name>OADG_KLEP7</name>
<evidence type="ECO:0000255" key="1">
    <source>
        <dbReference type="HAMAP-Rule" id="MF_00404"/>
    </source>
</evidence>
<protein>
    <recommendedName>
        <fullName evidence="1">Probable oxaloacetate decarboxylase gamma chain</fullName>
        <ecNumber evidence="1">7.2.4.2</ecNumber>
    </recommendedName>
</protein>
<reference key="1">
    <citation type="submission" date="2006-09" db="EMBL/GenBank/DDBJ databases">
        <authorList>
            <consortium name="The Klebsiella pneumonia Genome Sequencing Project"/>
            <person name="McClelland M."/>
            <person name="Sanderson E.K."/>
            <person name="Spieth J."/>
            <person name="Clifton W.S."/>
            <person name="Latreille P."/>
            <person name="Sabo A."/>
            <person name="Pepin K."/>
            <person name="Bhonagiri V."/>
            <person name="Porwollik S."/>
            <person name="Ali J."/>
            <person name="Wilson R.K."/>
        </authorList>
    </citation>
    <scope>NUCLEOTIDE SEQUENCE [LARGE SCALE GENOMIC DNA]</scope>
    <source>
        <strain>ATCC 700721 / MGH 78578</strain>
    </source>
</reference>
<dbReference type="EC" id="7.2.4.2" evidence="1"/>
<dbReference type="EMBL" id="CP000647">
    <property type="protein sequence ID" value="ABR75492.1"/>
    <property type="molecule type" value="Genomic_DNA"/>
</dbReference>
<dbReference type="RefSeq" id="WP_011977638.1">
    <property type="nucleotide sequence ID" value="NC_009648.1"/>
</dbReference>
<dbReference type="SMR" id="A6T4H1"/>
<dbReference type="STRING" id="272620.KPN_00032"/>
<dbReference type="PaxDb" id="272620-KPN_00032"/>
<dbReference type="EnsemblBacteria" id="ABR75492">
    <property type="protein sequence ID" value="ABR75492"/>
    <property type="gene ID" value="KPN_00032"/>
</dbReference>
<dbReference type="KEGG" id="kpn:KPN_00032"/>
<dbReference type="HOGENOM" id="CLU_168750_3_2_6"/>
<dbReference type="Proteomes" id="UP000000265">
    <property type="component" value="Chromosome"/>
</dbReference>
<dbReference type="GO" id="GO:0005886">
    <property type="term" value="C:plasma membrane"/>
    <property type="evidence" value="ECO:0007669"/>
    <property type="project" value="UniProtKB-SubCell"/>
</dbReference>
<dbReference type="GO" id="GO:0015451">
    <property type="term" value="F:decarboxylation-driven active transmembrane transporter activity"/>
    <property type="evidence" value="ECO:0007669"/>
    <property type="project" value="UniProtKB-EC"/>
</dbReference>
<dbReference type="GO" id="GO:0008948">
    <property type="term" value="F:oxaloacetate decarboxylase activity"/>
    <property type="evidence" value="ECO:0007669"/>
    <property type="project" value="UniProtKB-UniRule"/>
</dbReference>
<dbReference type="GO" id="GO:0015081">
    <property type="term" value="F:sodium ion transmembrane transporter activity"/>
    <property type="evidence" value="ECO:0007669"/>
    <property type="project" value="UniProtKB-UniRule"/>
</dbReference>
<dbReference type="GO" id="GO:0036376">
    <property type="term" value="P:sodium ion export across plasma membrane"/>
    <property type="evidence" value="ECO:0007669"/>
    <property type="project" value="InterPro"/>
</dbReference>
<dbReference type="HAMAP" id="MF_00404">
    <property type="entry name" value="OadG"/>
    <property type="match status" value="1"/>
</dbReference>
<dbReference type="InterPro" id="IPR005899">
    <property type="entry name" value="Na_pump_deCOase"/>
</dbReference>
<dbReference type="InterPro" id="IPR023424">
    <property type="entry name" value="OadG"/>
</dbReference>
<dbReference type="NCBIfam" id="TIGR01195">
    <property type="entry name" value="oadG_fam"/>
    <property type="match status" value="1"/>
</dbReference>
<dbReference type="NCBIfam" id="NF002792">
    <property type="entry name" value="PRK02919.1"/>
    <property type="match status" value="1"/>
</dbReference>
<dbReference type="Pfam" id="PF04277">
    <property type="entry name" value="OAD_gamma"/>
    <property type="match status" value="1"/>
</dbReference>
<accession>A6T4H1</accession>